<organism>
    <name type="scientific">Schizosaccharomyces pombe (strain 972 / ATCC 24843)</name>
    <name type="common">Fission yeast</name>
    <dbReference type="NCBI Taxonomy" id="284812"/>
    <lineage>
        <taxon>Eukaryota</taxon>
        <taxon>Fungi</taxon>
        <taxon>Dikarya</taxon>
        <taxon>Ascomycota</taxon>
        <taxon>Taphrinomycotina</taxon>
        <taxon>Schizosaccharomycetes</taxon>
        <taxon>Schizosaccharomycetales</taxon>
        <taxon>Schizosaccharomycetaceae</taxon>
        <taxon>Schizosaccharomyces</taxon>
    </lineage>
</organism>
<gene>
    <name type="primary">gid10</name>
    <name evidence="5" type="ORF">SPAP8A3.13c</name>
</gene>
<evidence type="ECO:0000250" key="1">
    <source>
        <dbReference type="UniProtKB" id="P53242"/>
    </source>
</evidence>
<evidence type="ECO:0000256" key="2">
    <source>
        <dbReference type="SAM" id="MobiDB-lite"/>
    </source>
</evidence>
<evidence type="ECO:0000269" key="3">
    <source>
    </source>
</evidence>
<evidence type="ECO:0000305" key="4"/>
<evidence type="ECO:0000312" key="5">
    <source>
        <dbReference type="PomBase" id="SPAP8A3.13c"/>
    </source>
</evidence>
<name>GID10_SCHPO</name>
<accession>Q9UT04</accession>
<sequence length="547" mass="62348">MPRSLDNFQNEDSSHPNEQGAWADSGSGFPNPNSNDVSNSQRNHHRHMFPLARIRSELSEQDSSISFTHDPLHIPLPNPSNNNDNIFHPQVHSSFHSRSASRQRRRSGLSRSNATRYSRRSLSDWLETIRENNYDEASIPSFFSPHTERLVGRVLRLNRYLQNSELLDRNSSTFGSNPNSVFSAQPTEPSVEPPTSSFPIQPPLPPSRSISISNPQSLSFPSSFDQSNYNFQAASTPQFNPLIEHLRRSNSPLNPSHDSAGASTFNTYFPNSTYQNILNSLDNNPAVLDLNGPPNQESSSSASSYGSRTQTPNARSCSLNIVFHKHKKVCTYYMIRHYAKRRLFITPTWWLRSGSVFRGLQFGGVQSISGLPPLTNPKERWIVDVSIHVVDYKRRALEGQLNAQARSSDPSSTISTAWTGEILDFSEKLNFATEKWSAPLEIDVCYWRKLAPFQNMDTNTFLETITNPKKLYKICQKYIFMRWKDMLILKDQTDTSESRITGFYFCCLCRENGYIQGYYYDPKHAFCSQPLNLFPEQPSLSPSYHFV</sequence>
<feature type="chain" id="PRO_0000362153" description="GID complex substrate-recognition subunit 10">
    <location>
        <begin position="1"/>
        <end position="547"/>
    </location>
</feature>
<feature type="region of interest" description="Disordered" evidence="2">
    <location>
        <begin position="1"/>
        <end position="42"/>
    </location>
</feature>
<feature type="region of interest" description="Disordered" evidence="2">
    <location>
        <begin position="60"/>
        <end position="115"/>
    </location>
</feature>
<feature type="region of interest" description="Disordered" evidence="2">
    <location>
        <begin position="169"/>
        <end position="217"/>
    </location>
</feature>
<feature type="region of interest" description="Disordered" evidence="2">
    <location>
        <begin position="285"/>
        <end position="313"/>
    </location>
</feature>
<feature type="compositionally biased region" description="Polar residues" evidence="2">
    <location>
        <begin position="1"/>
        <end position="11"/>
    </location>
</feature>
<feature type="compositionally biased region" description="Polar residues" evidence="2">
    <location>
        <begin position="28"/>
        <end position="41"/>
    </location>
</feature>
<feature type="compositionally biased region" description="Basic residues" evidence="2">
    <location>
        <begin position="99"/>
        <end position="108"/>
    </location>
</feature>
<feature type="compositionally biased region" description="Polar residues" evidence="2">
    <location>
        <begin position="169"/>
        <end position="185"/>
    </location>
</feature>
<feature type="compositionally biased region" description="Low complexity" evidence="2">
    <location>
        <begin position="186"/>
        <end position="199"/>
    </location>
</feature>
<feature type="compositionally biased region" description="Low complexity" evidence="2">
    <location>
        <begin position="207"/>
        <end position="217"/>
    </location>
</feature>
<feature type="compositionally biased region" description="Low complexity" evidence="2">
    <location>
        <begin position="298"/>
        <end position="307"/>
    </location>
</feature>
<protein>
    <recommendedName>
        <fullName>GID complex substrate-recognition subunit 10</fullName>
    </recommendedName>
    <alternativeName>
        <fullName>Glucose-induced degradation protein 10</fullName>
    </alternativeName>
</protein>
<dbReference type="EMBL" id="CU329670">
    <property type="protein sequence ID" value="CAB55180.1"/>
    <property type="molecule type" value="Genomic_DNA"/>
</dbReference>
<dbReference type="PIR" id="T39250">
    <property type="entry name" value="T39250"/>
</dbReference>
<dbReference type="RefSeq" id="NP_594952.1">
    <property type="nucleotide sequence ID" value="NM_001020383.2"/>
</dbReference>
<dbReference type="SMR" id="Q9UT04"/>
<dbReference type="BioGRID" id="279587">
    <property type="interactions" value="11"/>
</dbReference>
<dbReference type="FunCoup" id="Q9UT04">
    <property type="interactions" value="4"/>
</dbReference>
<dbReference type="STRING" id="284812.Q9UT04"/>
<dbReference type="PaxDb" id="4896-SPAP8A3.13c.1"/>
<dbReference type="EnsemblFungi" id="SPAP8A3.13c.1">
    <property type="protein sequence ID" value="SPAP8A3.13c.1:pep"/>
    <property type="gene ID" value="SPAP8A3.13c"/>
</dbReference>
<dbReference type="GeneID" id="2543156"/>
<dbReference type="KEGG" id="spo:2543156"/>
<dbReference type="PomBase" id="SPAP8A3.13c">
    <property type="gene designation" value="gid10"/>
</dbReference>
<dbReference type="VEuPathDB" id="FungiDB:SPAP8A3.13c"/>
<dbReference type="eggNOG" id="KOG4635">
    <property type="taxonomic scope" value="Eukaryota"/>
</dbReference>
<dbReference type="HOGENOM" id="CLU_508210_0_0_1"/>
<dbReference type="InParanoid" id="Q9UT04"/>
<dbReference type="PRO" id="PR:Q9UT04"/>
<dbReference type="Proteomes" id="UP000002485">
    <property type="component" value="Chromosome I"/>
</dbReference>
<dbReference type="GO" id="GO:0034657">
    <property type="term" value="C:GID complex"/>
    <property type="evidence" value="ECO:0000318"/>
    <property type="project" value="GO_Central"/>
</dbReference>
<dbReference type="GO" id="GO:0005634">
    <property type="term" value="C:nucleus"/>
    <property type="evidence" value="ECO:0007005"/>
    <property type="project" value="PomBase"/>
</dbReference>
<dbReference type="GO" id="GO:0005773">
    <property type="term" value="C:vacuole"/>
    <property type="evidence" value="ECO:0007669"/>
    <property type="project" value="GOC"/>
</dbReference>
<dbReference type="GO" id="GO:0045721">
    <property type="term" value="P:negative regulation of gluconeogenesis"/>
    <property type="evidence" value="ECO:0000318"/>
    <property type="project" value="GO_Central"/>
</dbReference>
<dbReference type="GO" id="GO:0043161">
    <property type="term" value="P:proteasome-mediated ubiquitin-dependent protein catabolic process"/>
    <property type="evidence" value="ECO:0000318"/>
    <property type="project" value="GO_Central"/>
</dbReference>
<dbReference type="GO" id="GO:0007039">
    <property type="term" value="P:protein catabolic process in the vacuole"/>
    <property type="evidence" value="ECO:0000318"/>
    <property type="project" value="GO_Central"/>
</dbReference>
<dbReference type="GO" id="GO:0006623">
    <property type="term" value="P:protein targeting to vacuole"/>
    <property type="evidence" value="ECO:0000318"/>
    <property type="project" value="GO_Central"/>
</dbReference>
<dbReference type="InterPro" id="IPR018618">
    <property type="entry name" value="Vacuolar_import/degrad_Vid24"/>
</dbReference>
<dbReference type="PANTHER" id="PTHR14534:SF3">
    <property type="entry name" value="GID COMPLEX SUBUNIT 4 HOMOLOG"/>
    <property type="match status" value="1"/>
</dbReference>
<dbReference type="PANTHER" id="PTHR14534">
    <property type="entry name" value="VACUOLAR IMPORT AND DEGRADATION PROTEIN 24"/>
    <property type="match status" value="1"/>
</dbReference>
<dbReference type="Pfam" id="PF09783">
    <property type="entry name" value="Vac_ImportDeg"/>
    <property type="match status" value="1"/>
</dbReference>
<keyword id="KW-0539">Nucleus</keyword>
<keyword id="KW-1185">Reference proteome</keyword>
<reference key="1">
    <citation type="journal article" date="2002" name="Nature">
        <title>The genome sequence of Schizosaccharomyces pombe.</title>
        <authorList>
            <person name="Wood V."/>
            <person name="Gwilliam R."/>
            <person name="Rajandream M.A."/>
            <person name="Lyne M.H."/>
            <person name="Lyne R."/>
            <person name="Stewart A."/>
            <person name="Sgouros J.G."/>
            <person name="Peat N."/>
            <person name="Hayles J."/>
            <person name="Baker S.G."/>
            <person name="Basham D."/>
            <person name="Bowman S."/>
            <person name="Brooks K."/>
            <person name="Brown D."/>
            <person name="Brown S."/>
            <person name="Chillingworth T."/>
            <person name="Churcher C.M."/>
            <person name="Collins M."/>
            <person name="Connor R."/>
            <person name="Cronin A."/>
            <person name="Davis P."/>
            <person name="Feltwell T."/>
            <person name="Fraser A."/>
            <person name="Gentles S."/>
            <person name="Goble A."/>
            <person name="Hamlin N."/>
            <person name="Harris D.E."/>
            <person name="Hidalgo J."/>
            <person name="Hodgson G."/>
            <person name="Holroyd S."/>
            <person name="Hornsby T."/>
            <person name="Howarth S."/>
            <person name="Huckle E.J."/>
            <person name="Hunt S."/>
            <person name="Jagels K."/>
            <person name="James K.D."/>
            <person name="Jones L."/>
            <person name="Jones M."/>
            <person name="Leather S."/>
            <person name="McDonald S."/>
            <person name="McLean J."/>
            <person name="Mooney P."/>
            <person name="Moule S."/>
            <person name="Mungall K.L."/>
            <person name="Murphy L.D."/>
            <person name="Niblett D."/>
            <person name="Odell C."/>
            <person name="Oliver K."/>
            <person name="O'Neil S."/>
            <person name="Pearson D."/>
            <person name="Quail M.A."/>
            <person name="Rabbinowitsch E."/>
            <person name="Rutherford K.M."/>
            <person name="Rutter S."/>
            <person name="Saunders D."/>
            <person name="Seeger K."/>
            <person name="Sharp S."/>
            <person name="Skelton J."/>
            <person name="Simmonds M.N."/>
            <person name="Squares R."/>
            <person name="Squares S."/>
            <person name="Stevens K."/>
            <person name="Taylor K."/>
            <person name="Taylor R.G."/>
            <person name="Tivey A."/>
            <person name="Walsh S.V."/>
            <person name="Warren T."/>
            <person name="Whitehead S."/>
            <person name="Woodward J.R."/>
            <person name="Volckaert G."/>
            <person name="Aert R."/>
            <person name="Robben J."/>
            <person name="Grymonprez B."/>
            <person name="Weltjens I."/>
            <person name="Vanstreels E."/>
            <person name="Rieger M."/>
            <person name="Schaefer M."/>
            <person name="Mueller-Auer S."/>
            <person name="Gabel C."/>
            <person name="Fuchs M."/>
            <person name="Duesterhoeft A."/>
            <person name="Fritzc C."/>
            <person name="Holzer E."/>
            <person name="Moestl D."/>
            <person name="Hilbert H."/>
            <person name="Borzym K."/>
            <person name="Langer I."/>
            <person name="Beck A."/>
            <person name="Lehrach H."/>
            <person name="Reinhardt R."/>
            <person name="Pohl T.M."/>
            <person name="Eger P."/>
            <person name="Zimmermann W."/>
            <person name="Wedler H."/>
            <person name="Wambutt R."/>
            <person name="Purnelle B."/>
            <person name="Goffeau A."/>
            <person name="Cadieu E."/>
            <person name="Dreano S."/>
            <person name="Gloux S."/>
            <person name="Lelaure V."/>
            <person name="Mottier S."/>
            <person name="Galibert F."/>
            <person name="Aves S.J."/>
            <person name="Xiang Z."/>
            <person name="Hunt C."/>
            <person name="Moore K."/>
            <person name="Hurst S.M."/>
            <person name="Lucas M."/>
            <person name="Rochet M."/>
            <person name="Gaillardin C."/>
            <person name="Tallada V.A."/>
            <person name="Garzon A."/>
            <person name="Thode G."/>
            <person name="Daga R.R."/>
            <person name="Cruzado L."/>
            <person name="Jimenez J."/>
            <person name="Sanchez M."/>
            <person name="del Rey F."/>
            <person name="Benito J."/>
            <person name="Dominguez A."/>
            <person name="Revuelta J.L."/>
            <person name="Moreno S."/>
            <person name="Armstrong J."/>
            <person name="Forsburg S.L."/>
            <person name="Cerutti L."/>
            <person name="Lowe T."/>
            <person name="McCombie W.R."/>
            <person name="Paulsen I."/>
            <person name="Potashkin J."/>
            <person name="Shpakovski G.V."/>
            <person name="Ussery D."/>
            <person name="Barrell B.G."/>
            <person name="Nurse P."/>
        </authorList>
    </citation>
    <scope>NUCLEOTIDE SEQUENCE [LARGE SCALE GENOMIC DNA]</scope>
    <source>
        <strain>972 / ATCC 24843</strain>
    </source>
</reference>
<reference key="2">
    <citation type="journal article" date="2006" name="Nat. Biotechnol.">
        <title>ORFeome cloning and global analysis of protein localization in the fission yeast Schizosaccharomyces pombe.</title>
        <authorList>
            <person name="Matsuyama A."/>
            <person name="Arai R."/>
            <person name="Yashiroda Y."/>
            <person name="Shirai A."/>
            <person name="Kamata A."/>
            <person name="Sekido S."/>
            <person name="Kobayashi Y."/>
            <person name="Hashimoto A."/>
            <person name="Hamamoto M."/>
            <person name="Hiraoka Y."/>
            <person name="Horinouchi S."/>
            <person name="Yoshida M."/>
        </authorList>
    </citation>
    <scope>SUBCELLULAR LOCATION [LARGE SCALE ANALYSIS]</scope>
</reference>
<proteinExistence type="inferred from homology"/>
<comment type="function">
    <text evidence="1">Substrate-recognition component of the GID E3 ligase complex recruiting N termini and catalyzing ubiquitination of proteins targeted for degradation. GID E3 is regulated through assembly with interchangeable N-degron-binding substrate receptors induced by distinct environmental perturbations. Required for the adaptation to osmotic or heat stress. Specific for substrates with an N-terminal Pro (Pro/N-degron).</text>
</comment>
<comment type="subunit">
    <text evidence="1">Substrate-recognition component of the GID/CTLH complex. In the absence of stress, the complex exists as an inactive anticipatory complex (GID(Ant)), composed of Gid1, the E3 ubiquitin-ligase Gid2, Gid5, Gid8, and the RING-like subunit Gid9, awaiting a substrate receptor to form the active E3 ligase complex. When cells are shifted to glucose-containing medium, the substrate receptor Gid4 is induced and becomes part of the complex, named GID(SR4). Additionally, Gid7 transforms the GID(SR4) E3 ligase core into a higher-order supramolecular assembly (Chelator-GID(SR4)). Under osmotic or heat stress, the substrate receptor Gid10 is induced and becomes part of the complex, named GID(SR10). Interacts with proteins that have an N-terminal Pro/N-degron.</text>
</comment>
<comment type="subcellular location">
    <subcellularLocation>
        <location evidence="3">Nucleus</location>
    </subcellularLocation>
</comment>
<comment type="similarity">
    <text evidence="4">Belongs to the GID4/VID24 family.</text>
</comment>